<feature type="chain" id="PRO_0000098204" description="Gene 1 protein">
    <location>
        <begin position="1"/>
        <end position="353"/>
    </location>
</feature>
<feature type="transmembrane region" description="Helical" evidence="2">
    <location>
        <begin position="254"/>
        <end position="270"/>
    </location>
</feature>
<feature type="binding site" evidence="2">
    <location>
        <begin position="8"/>
        <end position="15"/>
    </location>
    <ligand>
        <name>ATP</name>
        <dbReference type="ChEBI" id="CHEBI:30616"/>
    </ligand>
</feature>
<feature type="splice variant" id="VSP_037572" description="In isoform G11P." evidence="3">
    <location>
        <begin position="1"/>
        <end position="240"/>
    </location>
</feature>
<organismHost>
    <name type="scientific">Escherichia coli</name>
    <dbReference type="NCBI Taxonomy" id="562"/>
</organismHost>
<organism>
    <name type="scientific">Escherichia phage If1</name>
    <name type="common">Bacteriophage If1</name>
    <dbReference type="NCBI Taxonomy" id="10868"/>
    <lineage>
        <taxon>Viruses</taxon>
        <taxon>Monodnaviria</taxon>
        <taxon>Loebvirae</taxon>
        <taxon>Hofneiviricota</taxon>
        <taxon>Faserviricetes</taxon>
        <taxon>Tubulavirales</taxon>
        <taxon>Inoviridae</taxon>
        <taxon>Infulavirus</taxon>
        <taxon>Infulavirus If1</taxon>
    </lineage>
</organism>
<evidence type="ECO:0000250" key="1"/>
<evidence type="ECO:0000255" key="2"/>
<evidence type="ECO:0000305" key="3"/>
<accession>O80299</accession>
<protein>
    <recommendedName>
        <fullName>Gene 1 protein</fullName>
    </recommendedName>
    <alternativeName>
        <fullName>G1P</fullName>
    </alternativeName>
</protein>
<gene>
    <name type="primary">I</name>
</gene>
<reference key="1">
    <citation type="submission" date="1993-10" db="EMBL/GenBank/DDBJ databases">
        <title>DNA sequence of the filamentous coliphage If1.</title>
        <authorList>
            <person name="Hill D.F."/>
            <person name="Hughes G."/>
            <person name="McNaughton J.C."/>
            <person name="Stockwell P.A."/>
            <person name="Petersen G.B."/>
        </authorList>
    </citation>
    <scope>NUCLEOTIDE SEQUENCE [GENOMIC DNA]</scope>
</reference>
<comment type="function">
    <text evidence="1">Isoform G1P plays an essential role in phage assembly. It is required to increase the number of adhesion zones between the inner and outer membranes of the host cell. The extrusion of neo-synthesized phages occurs at these adhesion sites. May be involved with G4P in creating zone through which the phage assembled and extruded (By similarity).</text>
</comment>
<comment type="function">
    <text evidence="1">Isoform G11P is also involved in phage assembly, probably playing a structural role in the formation of the phage assembly site.</text>
</comment>
<comment type="subunit">
    <text evidence="1">Interacts with G4P; this interaction results in a complex that spans the inner an outer host membranes.</text>
</comment>
<comment type="subcellular location">
    <subcellularLocation>
        <location evidence="3">Host membrane</location>
        <topology evidence="3">Single-pass membrane protein</topology>
    </subcellularLocation>
</comment>
<comment type="alternative products">
    <event type="alternative initiation"/>
    <isoform>
        <id>O80299-1</id>
        <name>G1P</name>
        <name>Gene 1 protein</name>
        <sequence type="displayed"/>
    </isoform>
    <isoform>
        <id>O80299-2</id>
        <name>G11P</name>
        <name>Gene 11 protein</name>
        <sequence type="described" ref="VSP_037572"/>
    </isoform>
</comment>
<comment type="similarity">
    <text evidence="3">Belongs to the inovirus G1P protein family.</text>
</comment>
<sequence>MAVYVVTGKLGAGKTLVAVGKIQDKIVSGCRVATNLDLRIHKLPRVGIFAKSPDVIRIPDKPSLDDLLAIGRGNNSYDENKNGLLVLDECGTWFNSRSWADKERQSVINWFLHARKLGWDIIFLIQDLSIMDKQARVALAEHVVYCRRLDKITIPFIGSIYSVITGSKLPLPKVHVGIVKYGDSPQSMTVERWTYTGRDLYAAYDTKQAFSDAYEHSSFSYLTPYLSHGRYAVKRDATFYMRLTRIYLKKYSRVLCLFCGFVSAFTYLSLSKPEATPQIKPVTTQIITSRYKPSELRITTSYRMGNAVGFEFMDAKKQKIASDDLIKDGFRMVYITPCSVELIKDGKHEKVTC</sequence>
<dbReference type="EMBL" id="U02303">
    <property type="protein sequence ID" value="AAC62157.1"/>
    <property type="molecule type" value="Genomic_DNA"/>
</dbReference>
<dbReference type="RefSeq" id="NP_047358.1">
    <molecule id="O80299-1"/>
    <property type="nucleotide sequence ID" value="NC_001954.1"/>
</dbReference>
<dbReference type="GeneID" id="1261857"/>
<dbReference type="KEGG" id="vg:1261857"/>
<dbReference type="OrthoDB" id="9125at10239"/>
<dbReference type="Proteomes" id="UP000001833">
    <property type="component" value="Genome"/>
</dbReference>
<dbReference type="GO" id="GO:0033644">
    <property type="term" value="C:host cell membrane"/>
    <property type="evidence" value="ECO:0007669"/>
    <property type="project" value="UniProtKB-SubCell"/>
</dbReference>
<dbReference type="GO" id="GO:0016020">
    <property type="term" value="C:membrane"/>
    <property type="evidence" value="ECO:0007669"/>
    <property type="project" value="UniProtKB-KW"/>
</dbReference>
<dbReference type="GO" id="GO:0005524">
    <property type="term" value="F:ATP binding"/>
    <property type="evidence" value="ECO:0007669"/>
    <property type="project" value="UniProtKB-KW"/>
</dbReference>
<dbReference type="GO" id="GO:0099045">
    <property type="term" value="P:viral extrusion"/>
    <property type="evidence" value="ECO:0007669"/>
    <property type="project" value="UniProtKB-KW"/>
</dbReference>
<dbReference type="Gene3D" id="3.40.50.300">
    <property type="entry name" value="P-loop containing nucleotide triphosphate hydrolases"/>
    <property type="match status" value="1"/>
</dbReference>
<dbReference type="InterPro" id="IPR027417">
    <property type="entry name" value="P-loop_NTPase"/>
</dbReference>
<dbReference type="InterPro" id="IPR008900">
    <property type="entry name" value="Zot_N"/>
</dbReference>
<dbReference type="Pfam" id="PF05707">
    <property type="entry name" value="Zot"/>
    <property type="match status" value="1"/>
</dbReference>
<name>G1P_BPIF1</name>
<keyword id="KW-0024">Alternative initiation</keyword>
<keyword id="KW-0067">ATP-binding</keyword>
<keyword id="KW-1043">Host membrane</keyword>
<keyword id="KW-0472">Membrane</keyword>
<keyword id="KW-0547">Nucleotide-binding</keyword>
<keyword id="KW-1185">Reference proteome</keyword>
<keyword id="KW-0812">Transmembrane</keyword>
<keyword id="KW-1133">Transmembrane helix</keyword>
<keyword id="KW-1249">Viral extrusion</keyword>
<keyword id="KW-1188">Viral release from host cell</keyword>
<proteinExistence type="inferred from homology"/>